<gene>
    <name type="primary">leuB</name>
    <name type="ordered locus">STK_04330</name>
</gene>
<dbReference type="EC" id="1.1.1.85"/>
<dbReference type="EMBL" id="D86857">
    <property type="protein sequence ID" value="BAA13178.1"/>
    <property type="molecule type" value="Genomic_DNA"/>
</dbReference>
<dbReference type="EMBL" id="BA000023">
    <property type="protein sequence ID" value="BAK54281.1"/>
    <property type="molecule type" value="Genomic_DNA"/>
</dbReference>
<dbReference type="RefSeq" id="WP_010978405.1">
    <property type="nucleotide sequence ID" value="NC_003106.2"/>
</dbReference>
<dbReference type="PDB" id="1WPW">
    <property type="method" value="X-ray"/>
    <property type="resolution" value="2.80 A"/>
    <property type="chains" value="A/B=2-337"/>
</dbReference>
<dbReference type="PDBsum" id="1WPW"/>
<dbReference type="SMR" id="P50455"/>
<dbReference type="STRING" id="273063.STK_04330"/>
<dbReference type="GeneID" id="95643461"/>
<dbReference type="KEGG" id="sto:STK_04330"/>
<dbReference type="PATRIC" id="fig|273063.9.peg.503"/>
<dbReference type="eggNOG" id="arCOG01163">
    <property type="taxonomic scope" value="Archaea"/>
</dbReference>
<dbReference type="OrthoDB" id="6813at2157"/>
<dbReference type="BRENDA" id="1.1.1.85">
    <property type="organism ID" value="15396"/>
</dbReference>
<dbReference type="UniPathway" id="UPA00048">
    <property type="reaction ID" value="UER00072"/>
</dbReference>
<dbReference type="EvolutionaryTrace" id="P50455"/>
<dbReference type="Proteomes" id="UP000001015">
    <property type="component" value="Chromosome"/>
</dbReference>
<dbReference type="GO" id="GO:0005737">
    <property type="term" value="C:cytoplasm"/>
    <property type="evidence" value="ECO:0007669"/>
    <property type="project" value="UniProtKB-SubCell"/>
</dbReference>
<dbReference type="GO" id="GO:0003862">
    <property type="term" value="F:3-isopropylmalate dehydrogenase activity"/>
    <property type="evidence" value="ECO:0007669"/>
    <property type="project" value="UniProtKB-EC"/>
</dbReference>
<dbReference type="GO" id="GO:0004449">
    <property type="term" value="F:isocitrate dehydrogenase (NAD+) activity"/>
    <property type="evidence" value="ECO:0007669"/>
    <property type="project" value="TreeGrafter"/>
</dbReference>
<dbReference type="GO" id="GO:0000287">
    <property type="term" value="F:magnesium ion binding"/>
    <property type="evidence" value="ECO:0007669"/>
    <property type="project" value="InterPro"/>
</dbReference>
<dbReference type="GO" id="GO:0051287">
    <property type="term" value="F:NAD binding"/>
    <property type="evidence" value="ECO:0007669"/>
    <property type="project" value="InterPro"/>
</dbReference>
<dbReference type="GO" id="GO:0006102">
    <property type="term" value="P:isocitrate metabolic process"/>
    <property type="evidence" value="ECO:0007669"/>
    <property type="project" value="TreeGrafter"/>
</dbReference>
<dbReference type="GO" id="GO:0009098">
    <property type="term" value="P:L-leucine biosynthetic process"/>
    <property type="evidence" value="ECO:0007669"/>
    <property type="project" value="UniProtKB-UniPathway"/>
</dbReference>
<dbReference type="GO" id="GO:0006099">
    <property type="term" value="P:tricarboxylic acid cycle"/>
    <property type="evidence" value="ECO:0007669"/>
    <property type="project" value="TreeGrafter"/>
</dbReference>
<dbReference type="Gene3D" id="3.40.718.10">
    <property type="entry name" value="Isopropylmalate Dehydrogenase"/>
    <property type="match status" value="1"/>
</dbReference>
<dbReference type="InterPro" id="IPR019818">
    <property type="entry name" value="IsoCit/isopropylmalate_DH_CS"/>
</dbReference>
<dbReference type="InterPro" id="IPR024084">
    <property type="entry name" value="IsoPropMal-DH-like_dom"/>
</dbReference>
<dbReference type="InterPro" id="IPR011828">
    <property type="entry name" value="LEU3_arc"/>
</dbReference>
<dbReference type="NCBIfam" id="TIGR02088">
    <property type="entry name" value="LEU3_arch"/>
    <property type="match status" value="1"/>
</dbReference>
<dbReference type="PANTHER" id="PTHR11835">
    <property type="entry name" value="DECARBOXYLATING DEHYDROGENASES-ISOCITRATE, ISOPROPYLMALATE, TARTRATE"/>
    <property type="match status" value="1"/>
</dbReference>
<dbReference type="PANTHER" id="PTHR11835:SF34">
    <property type="entry name" value="ISOCITRATE DEHYDROGENASE [NAD] SUBUNIT ALPHA, MITOCHONDRIAL"/>
    <property type="match status" value="1"/>
</dbReference>
<dbReference type="Pfam" id="PF00180">
    <property type="entry name" value="Iso_dh"/>
    <property type="match status" value="1"/>
</dbReference>
<dbReference type="SMART" id="SM01329">
    <property type="entry name" value="Iso_dh"/>
    <property type="match status" value="1"/>
</dbReference>
<dbReference type="SUPFAM" id="SSF53659">
    <property type="entry name" value="Isocitrate/Isopropylmalate dehydrogenase-like"/>
    <property type="match status" value="1"/>
</dbReference>
<dbReference type="PROSITE" id="PS00470">
    <property type="entry name" value="IDH_IMDH"/>
    <property type="match status" value="1"/>
</dbReference>
<proteinExistence type="evidence at protein level"/>
<protein>
    <recommendedName>
        <fullName>3-isopropylmalate dehydrogenase</fullName>
        <shortName>3-IPM-DH</shortName>
        <shortName>IMDH</shortName>
        <ecNumber>1.1.1.85</ecNumber>
    </recommendedName>
    <alternativeName>
        <fullName>Beta-IPM dehydrogenase</fullName>
    </alternativeName>
</protein>
<organism>
    <name type="scientific">Sulfurisphaera tokodaii (strain DSM 16993 / JCM 10545 / NBRC 100140 / 7)</name>
    <name type="common">Sulfolobus tokodaii</name>
    <dbReference type="NCBI Taxonomy" id="273063"/>
    <lineage>
        <taxon>Archaea</taxon>
        <taxon>Thermoproteota</taxon>
        <taxon>Thermoprotei</taxon>
        <taxon>Sulfolobales</taxon>
        <taxon>Sulfolobaceae</taxon>
        <taxon>Sulfurisphaera</taxon>
    </lineage>
</organism>
<feature type="initiator methionine" description="Removed" evidence="2">
    <location>
        <position position="1"/>
    </location>
</feature>
<feature type="chain" id="PRO_0000083812" description="3-isopropylmalate dehydrogenase">
    <location>
        <begin position="2"/>
        <end position="337"/>
    </location>
</feature>
<feature type="binding site" evidence="1">
    <location>
        <position position="86"/>
    </location>
    <ligand>
        <name>substrate</name>
    </ligand>
</feature>
<feature type="binding site" evidence="1">
    <location>
        <position position="96"/>
    </location>
    <ligand>
        <name>substrate</name>
    </ligand>
</feature>
<feature type="binding site" evidence="1">
    <location>
        <position position="117"/>
    </location>
    <ligand>
        <name>substrate</name>
    </ligand>
</feature>
<feature type="binding site" evidence="1">
    <location>
        <position position="201"/>
    </location>
    <ligand>
        <name>Mg(2+)</name>
        <dbReference type="ChEBI" id="CHEBI:18420"/>
    </ligand>
</feature>
<feature type="binding site" evidence="1">
    <location>
        <position position="201"/>
    </location>
    <ligand>
        <name>substrate</name>
    </ligand>
</feature>
<feature type="binding site" evidence="1">
    <location>
        <position position="225"/>
    </location>
    <ligand>
        <name>Mg(2+)</name>
        <dbReference type="ChEBI" id="CHEBI:18420"/>
    </ligand>
</feature>
<feature type="binding site" evidence="1">
    <location>
        <position position="229"/>
    </location>
    <ligand>
        <name>Mg(2+)</name>
        <dbReference type="ChEBI" id="CHEBI:18420"/>
    </ligand>
</feature>
<feature type="binding site" evidence="1">
    <location>
        <begin position="258"/>
        <end position="270"/>
    </location>
    <ligand>
        <name>NAD(+)</name>
        <dbReference type="ChEBI" id="CHEBI:57540"/>
    </ligand>
</feature>
<feature type="site" description="Important for catalysis" evidence="1">
    <location>
        <position position="124"/>
    </location>
</feature>
<feature type="site" description="Important for catalysis" evidence="1">
    <location>
        <position position="170"/>
    </location>
</feature>
<feature type="strand" evidence="5">
    <location>
        <begin position="3"/>
        <end position="8"/>
    </location>
</feature>
<feature type="helix" evidence="5">
    <location>
        <begin position="14"/>
        <end position="31"/>
    </location>
</feature>
<feature type="strand" evidence="5">
    <location>
        <begin position="36"/>
        <end position="41"/>
    </location>
</feature>
<feature type="helix" evidence="5">
    <location>
        <begin position="45"/>
        <end position="50"/>
    </location>
</feature>
<feature type="strand" evidence="5">
    <location>
        <begin position="51"/>
        <end position="55"/>
    </location>
</feature>
<feature type="helix" evidence="5">
    <location>
        <begin position="57"/>
        <end position="64"/>
    </location>
</feature>
<feature type="strand" evidence="5">
    <location>
        <begin position="67"/>
        <end position="71"/>
    </location>
</feature>
<feature type="helix" evidence="5">
    <location>
        <begin position="78"/>
        <end position="87"/>
    </location>
</feature>
<feature type="turn" evidence="5">
    <location>
        <begin position="88"/>
        <end position="90"/>
    </location>
</feature>
<feature type="strand" evidence="5">
    <location>
        <begin position="93"/>
        <end position="99"/>
    </location>
</feature>
<feature type="turn" evidence="5">
    <location>
        <begin position="102"/>
        <end position="104"/>
    </location>
</feature>
<feature type="strand" evidence="5">
    <location>
        <begin position="112"/>
        <end position="118"/>
    </location>
</feature>
<feature type="strand" evidence="5">
    <location>
        <begin position="120"/>
        <end position="122"/>
    </location>
</feature>
<feature type="turn" evidence="5">
    <location>
        <begin position="123"/>
        <end position="125"/>
    </location>
</feature>
<feature type="strand" evidence="5">
    <location>
        <begin position="128"/>
        <end position="132"/>
    </location>
</feature>
<feature type="strand" evidence="5">
    <location>
        <begin position="135"/>
        <end position="143"/>
    </location>
</feature>
<feature type="helix" evidence="5">
    <location>
        <begin position="144"/>
        <end position="159"/>
    </location>
</feature>
<feature type="turn" evidence="5">
    <location>
        <begin position="160"/>
        <end position="162"/>
    </location>
</feature>
<feature type="strand" evidence="5">
    <location>
        <begin position="163"/>
        <end position="169"/>
    </location>
</feature>
<feature type="turn" evidence="5">
    <location>
        <begin position="171"/>
        <end position="173"/>
    </location>
</feature>
<feature type="helix" evidence="5">
    <location>
        <begin position="177"/>
        <end position="189"/>
    </location>
</feature>
<feature type="turn" evidence="5">
    <location>
        <begin position="190"/>
        <end position="192"/>
    </location>
</feature>
<feature type="strand" evidence="5">
    <location>
        <begin position="193"/>
        <end position="199"/>
    </location>
</feature>
<feature type="helix" evidence="5">
    <location>
        <begin position="200"/>
        <end position="209"/>
    </location>
</feature>
<feature type="helix" evidence="5">
    <location>
        <begin position="211"/>
        <end position="213"/>
    </location>
</feature>
<feature type="strand" evidence="5">
    <location>
        <begin position="215"/>
        <end position="219"/>
    </location>
</feature>
<feature type="helix" evidence="5">
    <location>
        <begin position="221"/>
        <end position="235"/>
    </location>
</feature>
<feature type="helix" evidence="5">
    <location>
        <begin position="238"/>
        <end position="240"/>
    </location>
</feature>
<feature type="strand" evidence="5">
    <location>
        <begin position="242"/>
        <end position="246"/>
    </location>
</feature>
<feature type="strand" evidence="5">
    <location>
        <begin position="251"/>
        <end position="257"/>
    </location>
</feature>
<feature type="turn" evidence="5">
    <location>
        <begin position="261"/>
        <end position="265"/>
    </location>
</feature>
<feature type="helix" evidence="5">
    <location>
        <begin position="272"/>
        <end position="287"/>
    </location>
</feature>
<feature type="helix" evidence="5">
    <location>
        <begin position="293"/>
        <end position="311"/>
    </location>
</feature>
<feature type="helix" evidence="5">
    <location>
        <begin position="317"/>
        <end position="319"/>
    </location>
</feature>
<feature type="helix" evidence="5">
    <location>
        <begin position="325"/>
        <end position="334"/>
    </location>
</feature>
<evidence type="ECO:0000250" key="1"/>
<evidence type="ECO:0000269" key="2">
    <source>
    </source>
</evidence>
<evidence type="ECO:0000269" key="3">
    <source ref="4"/>
</evidence>
<evidence type="ECO:0000305" key="4"/>
<evidence type="ECO:0007829" key="5">
    <source>
        <dbReference type="PDB" id="1WPW"/>
    </source>
</evidence>
<sequence>MGFTVALIQGDGIGPEIVSKSKRILAKINELYSLPIEYIEVEAGDRALARYGEALPKDSLKIIDKADIILKGPVGESAADVVVKLRQIYDMYANIRPAKSIPGIDTKYGNVDILIVRENTEDLYKGFEHIVSDGVAVGMKIITRFASERIAKVGLNFALRRRKKVTCVHKANVMRITDGLFAEACRSVLKGKVEYSEMYVDAAAANLVRNPQMFDVIVTENVYGDILSDEASQIAGSLGIAPSANIGDKKALFEPVHGAAFDIAGKNIGNPTAFLLSVSMMYERMYELSNDDRYIKASRALENAIYLVYKERKALTPDVGGNATTDDLINEIYNKLG</sequence>
<comment type="function">
    <text>Catalyzes the oxidation of 3-carboxy-2-hydroxy-4-methylpentanoate (3-isopropylmalate) to 3-carboxy-4-methyl-2-oxopentanoate. The product decarboxylates to 4-methyl-2 oxopentanoate.</text>
</comment>
<comment type="catalytic activity">
    <reaction>
        <text>(2R,3S)-3-isopropylmalate + NAD(+) = 4-methyl-2-oxopentanoate + CO2 + NADH</text>
        <dbReference type="Rhea" id="RHEA:32271"/>
        <dbReference type="ChEBI" id="CHEBI:16526"/>
        <dbReference type="ChEBI" id="CHEBI:17865"/>
        <dbReference type="ChEBI" id="CHEBI:35121"/>
        <dbReference type="ChEBI" id="CHEBI:57540"/>
        <dbReference type="ChEBI" id="CHEBI:57945"/>
        <dbReference type="EC" id="1.1.1.85"/>
    </reaction>
</comment>
<comment type="cofactor">
    <cofactor evidence="2">
        <name>Mg(2+)</name>
        <dbReference type="ChEBI" id="CHEBI:18420"/>
    </cofactor>
    <cofactor evidence="2">
        <name>Mn(2+)</name>
        <dbReference type="ChEBI" id="CHEBI:29035"/>
    </cofactor>
    <text evidence="2">Binds 1 Mg(2+) or Mn(2+) ion per subunit.</text>
</comment>
<comment type="pathway">
    <text>Amino-acid biosynthesis; L-leucine biosynthesis; L-leucine from 3-methyl-2-oxobutanoate: step 3/4.</text>
</comment>
<comment type="subunit">
    <text evidence="2 3">Homotetramer.</text>
</comment>
<comment type="subcellular location">
    <subcellularLocation>
        <location>Cytoplasm</location>
    </subcellularLocation>
</comment>
<comment type="similarity">
    <text evidence="4">Belongs to the isocitrate and isopropylmalate dehydrogenases family.</text>
</comment>
<name>LEU3_SULTO</name>
<keyword id="KW-0002">3D-structure</keyword>
<keyword id="KW-0028">Amino-acid biosynthesis</keyword>
<keyword id="KW-0100">Branched-chain amino acid biosynthesis</keyword>
<keyword id="KW-0963">Cytoplasm</keyword>
<keyword id="KW-0903">Direct protein sequencing</keyword>
<keyword id="KW-0432">Leucine biosynthesis</keyword>
<keyword id="KW-0460">Magnesium</keyword>
<keyword id="KW-0464">Manganese</keyword>
<keyword id="KW-0479">Metal-binding</keyword>
<keyword id="KW-0520">NAD</keyword>
<keyword id="KW-0560">Oxidoreductase</keyword>
<keyword id="KW-1185">Reference proteome</keyword>
<reference key="1">
    <citation type="journal article" date="1997" name="J. Bacteriol.">
        <title>Molecular and phylogenetic characterization of isopropylmalate dehydrogenase of a thermoacidophilic archaeon, Sulfolobus sp. strain 7.</title>
        <authorList>
            <person name="Suzuki T."/>
            <person name="Inoki Y."/>
            <person name="Yamagishi A."/>
            <person name="Iwasaki T."/>
            <person name="Wakagi T."/>
            <person name="Oshima T."/>
        </authorList>
    </citation>
    <scope>NUCLEOTIDE SEQUENCE [GENOMIC DNA]</scope>
    <source>
        <strain>DSM 16993 / JCM 10545 / NBRC 100140 / 7</strain>
    </source>
</reference>
<reference key="2">
    <citation type="journal article" date="2001" name="DNA Res.">
        <title>Complete genome sequence of an aerobic thermoacidophilic Crenarchaeon, Sulfolobus tokodaii strain7.</title>
        <authorList>
            <person name="Kawarabayasi Y."/>
            <person name="Hino Y."/>
            <person name="Horikawa H."/>
            <person name="Jin-no K."/>
            <person name="Takahashi M."/>
            <person name="Sekine M."/>
            <person name="Baba S."/>
            <person name="Ankai A."/>
            <person name="Kosugi H."/>
            <person name="Hosoyama A."/>
            <person name="Fukui S."/>
            <person name="Nagai Y."/>
            <person name="Nishijima K."/>
            <person name="Otsuka R."/>
            <person name="Nakazawa H."/>
            <person name="Takamiya M."/>
            <person name="Kato Y."/>
            <person name="Yoshizawa T."/>
            <person name="Tanaka T."/>
            <person name="Kudoh Y."/>
            <person name="Yamazaki J."/>
            <person name="Kushida N."/>
            <person name="Oguchi A."/>
            <person name="Aoki K."/>
            <person name="Masuda S."/>
            <person name="Yanagii M."/>
            <person name="Nishimura M."/>
            <person name="Yamagishi A."/>
            <person name="Oshima T."/>
            <person name="Kikuchi H."/>
        </authorList>
    </citation>
    <scope>NUCLEOTIDE SEQUENCE [LARGE SCALE GENOMIC DNA]</scope>
    <source>
        <strain>DSM 16993 / JCM 10545 / NBRC 100140 / 7</strain>
    </source>
</reference>
<reference key="3">
    <citation type="journal article" date="1995" name="FEMS Microbiol. Lett.">
        <title>Purification and characterization of 3-isopropylmalate dehydrogenase from a thermoacidophilic archaebacterium Sulfolobus sp. strain 7.</title>
        <authorList>
            <person name="Yoda E."/>
            <person name="Anraku Y."/>
            <person name="Kirino H."/>
            <person name="Wakagi T."/>
            <person name="Oshima T."/>
        </authorList>
    </citation>
    <scope>PROTEIN SEQUENCE OF 2-16</scope>
    <scope>SUBUNIT</scope>
    <scope>COFACTOR</scope>
    <scope>CHARACTERIZATION</scope>
    <source>
        <strain>DSM 16993 / JCM 10545 / NBRC 100140 / 7</strain>
    </source>
</reference>
<reference key="4">
    <citation type="submission" date="2004-10" db="PDB data bank">
        <title>Crystal structure of IPMDH from Sulfolobus tokodaii.</title>
        <authorList>
            <person name="Hirose R."/>
            <person name="Sakurai M."/>
            <person name="Suzuki T."/>
            <person name="Moriyama H."/>
            <person name="Sato T."/>
            <person name="Yamagishi A."/>
            <person name="Oshima T."/>
            <person name="Tanaka N."/>
        </authorList>
    </citation>
    <scope>X-RAY CRYSTALLOGRAPHY (2.9 ANGSTROMS)</scope>
    <scope>SUBUNIT</scope>
</reference>
<accession>P50455</accession>
<accession>F9VMY4</accession>
<accession>O05169</accession>